<dbReference type="EC" id="2.7.7.4" evidence="1"/>
<dbReference type="EMBL" id="CP000243">
    <property type="protein sequence ID" value="ABE08575.1"/>
    <property type="molecule type" value="Genomic_DNA"/>
</dbReference>
<dbReference type="RefSeq" id="WP_000372397.1">
    <property type="nucleotide sequence ID" value="NZ_CP064825.1"/>
</dbReference>
<dbReference type="SMR" id="Q1R7T9"/>
<dbReference type="KEGG" id="eci:UTI89_C3123"/>
<dbReference type="HOGENOM" id="CLU_043026_0_0_6"/>
<dbReference type="UniPathway" id="UPA00140">
    <property type="reaction ID" value="UER00204"/>
</dbReference>
<dbReference type="Proteomes" id="UP000001952">
    <property type="component" value="Chromosome"/>
</dbReference>
<dbReference type="GO" id="GO:0005524">
    <property type="term" value="F:ATP binding"/>
    <property type="evidence" value="ECO:0007669"/>
    <property type="project" value="UniProtKB-KW"/>
</dbReference>
<dbReference type="GO" id="GO:0004781">
    <property type="term" value="F:sulfate adenylyltransferase (ATP) activity"/>
    <property type="evidence" value="ECO:0007669"/>
    <property type="project" value="UniProtKB-UniRule"/>
</dbReference>
<dbReference type="GO" id="GO:0070814">
    <property type="term" value="P:hydrogen sulfide biosynthetic process"/>
    <property type="evidence" value="ECO:0007669"/>
    <property type="project" value="UniProtKB-UniRule"/>
</dbReference>
<dbReference type="GO" id="GO:0000103">
    <property type="term" value="P:sulfate assimilation"/>
    <property type="evidence" value="ECO:0007669"/>
    <property type="project" value="UniProtKB-UniRule"/>
</dbReference>
<dbReference type="CDD" id="cd23946">
    <property type="entry name" value="Sulfate_adenylyltransferase_2"/>
    <property type="match status" value="1"/>
</dbReference>
<dbReference type="FunFam" id="3.40.50.620:FF:000002">
    <property type="entry name" value="Sulfate adenylyltransferase subunit 2"/>
    <property type="match status" value="1"/>
</dbReference>
<dbReference type="Gene3D" id="3.40.50.620">
    <property type="entry name" value="HUPs"/>
    <property type="match status" value="1"/>
</dbReference>
<dbReference type="HAMAP" id="MF_00064">
    <property type="entry name" value="Sulf_adenylyltr_sub2"/>
    <property type="match status" value="1"/>
</dbReference>
<dbReference type="InterPro" id="IPR002500">
    <property type="entry name" value="PAPS_reduct_dom"/>
</dbReference>
<dbReference type="InterPro" id="IPR014729">
    <property type="entry name" value="Rossmann-like_a/b/a_fold"/>
</dbReference>
<dbReference type="InterPro" id="IPR011784">
    <property type="entry name" value="SO4_adenylTrfase_ssu"/>
</dbReference>
<dbReference type="InterPro" id="IPR050128">
    <property type="entry name" value="Sulfate_adenylyltrnsfr_sub2"/>
</dbReference>
<dbReference type="NCBIfam" id="TIGR02039">
    <property type="entry name" value="CysD"/>
    <property type="match status" value="1"/>
</dbReference>
<dbReference type="NCBIfam" id="NF003587">
    <property type="entry name" value="PRK05253.1"/>
    <property type="match status" value="1"/>
</dbReference>
<dbReference type="NCBIfam" id="NF009214">
    <property type="entry name" value="PRK12563.1"/>
    <property type="match status" value="1"/>
</dbReference>
<dbReference type="PANTHER" id="PTHR43196">
    <property type="entry name" value="SULFATE ADENYLYLTRANSFERASE SUBUNIT 2"/>
    <property type="match status" value="1"/>
</dbReference>
<dbReference type="PANTHER" id="PTHR43196:SF1">
    <property type="entry name" value="SULFATE ADENYLYLTRANSFERASE SUBUNIT 2"/>
    <property type="match status" value="1"/>
</dbReference>
<dbReference type="Pfam" id="PF01507">
    <property type="entry name" value="PAPS_reduct"/>
    <property type="match status" value="1"/>
</dbReference>
<dbReference type="PIRSF" id="PIRSF002936">
    <property type="entry name" value="CysDAde_trans"/>
    <property type="match status" value="1"/>
</dbReference>
<dbReference type="SUPFAM" id="SSF52402">
    <property type="entry name" value="Adenine nucleotide alpha hydrolases-like"/>
    <property type="match status" value="1"/>
</dbReference>
<organism>
    <name type="scientific">Escherichia coli (strain UTI89 / UPEC)</name>
    <dbReference type="NCBI Taxonomy" id="364106"/>
    <lineage>
        <taxon>Bacteria</taxon>
        <taxon>Pseudomonadati</taxon>
        <taxon>Pseudomonadota</taxon>
        <taxon>Gammaproteobacteria</taxon>
        <taxon>Enterobacterales</taxon>
        <taxon>Enterobacteriaceae</taxon>
        <taxon>Escherichia</taxon>
    </lineage>
</organism>
<keyword id="KW-0067">ATP-binding</keyword>
<keyword id="KW-0547">Nucleotide-binding</keyword>
<keyword id="KW-0548">Nucleotidyltransferase</keyword>
<keyword id="KW-0808">Transferase</keyword>
<reference key="1">
    <citation type="journal article" date="2006" name="Proc. Natl. Acad. Sci. U.S.A.">
        <title>Identification of genes subject to positive selection in uropathogenic strains of Escherichia coli: a comparative genomics approach.</title>
        <authorList>
            <person name="Chen S.L."/>
            <person name="Hung C.-S."/>
            <person name="Xu J."/>
            <person name="Reigstad C.S."/>
            <person name="Magrini V."/>
            <person name="Sabo A."/>
            <person name="Blasiar D."/>
            <person name="Bieri T."/>
            <person name="Meyer R.R."/>
            <person name="Ozersky P."/>
            <person name="Armstrong J.R."/>
            <person name="Fulton R.S."/>
            <person name="Latreille J.P."/>
            <person name="Spieth J."/>
            <person name="Hooton T.M."/>
            <person name="Mardis E.R."/>
            <person name="Hultgren S.J."/>
            <person name="Gordon J.I."/>
        </authorList>
    </citation>
    <scope>NUCLEOTIDE SEQUENCE [LARGE SCALE GENOMIC DNA]</scope>
    <source>
        <strain>UTI89 / UPEC</strain>
    </source>
</reference>
<gene>
    <name evidence="1" type="primary">cysD</name>
    <name type="ordered locus">UTI89_C3123</name>
</gene>
<comment type="function">
    <text evidence="1">With CysN forms the ATP sulfurylase (ATPS) that catalyzes the adenylation of sulfate producing adenosine 5'-phosphosulfate (APS) and diphosphate, the first enzymatic step in sulfur assimilation pathway. APS synthesis involves the formation of a high-energy phosphoric-sulfuric acid anhydride bond driven by GTP hydrolysis by CysN coupled to ATP hydrolysis by CysD.</text>
</comment>
<comment type="catalytic activity">
    <reaction evidence="1">
        <text>sulfate + ATP + H(+) = adenosine 5'-phosphosulfate + diphosphate</text>
        <dbReference type="Rhea" id="RHEA:18133"/>
        <dbReference type="ChEBI" id="CHEBI:15378"/>
        <dbReference type="ChEBI" id="CHEBI:16189"/>
        <dbReference type="ChEBI" id="CHEBI:30616"/>
        <dbReference type="ChEBI" id="CHEBI:33019"/>
        <dbReference type="ChEBI" id="CHEBI:58243"/>
        <dbReference type="EC" id="2.7.7.4"/>
    </reaction>
</comment>
<comment type="pathway">
    <text evidence="1">Sulfur metabolism; hydrogen sulfide biosynthesis; sulfite from sulfate: step 1/3.</text>
</comment>
<comment type="subunit">
    <text evidence="1">Heterodimer composed of CysD, the smaller subunit, and CysN.</text>
</comment>
<comment type="similarity">
    <text evidence="1">Belongs to the PAPS reductase family. CysD subfamily.</text>
</comment>
<protein>
    <recommendedName>
        <fullName evidence="1">Sulfate adenylyltransferase subunit 2</fullName>
        <ecNumber evidence="1">2.7.7.4</ecNumber>
    </recommendedName>
    <alternativeName>
        <fullName evidence="1">ATP-sulfurylase small subunit</fullName>
    </alternativeName>
    <alternativeName>
        <fullName evidence="1">Sulfate adenylate transferase</fullName>
        <shortName evidence="1">SAT</shortName>
    </alternativeName>
</protein>
<accession>Q1R7T9</accession>
<sequence>MDQKRLTHLRQLEAESIHIIREVAAEFSNPVMLYSIGKDSSVMLHLARKAFYPGTLPFPLLHVDTGWKFREMYEFRDRTAKAYGCELLVHKNPEGVAMGINPFVHGSAKHTDIMKTEGLKQALNKYGFDAAFGGARRDEEKSRAKERIYSFRDRFHRWDPKNQRPELWHNYNGQINKGESIRVFPLSNWTEQDIWQYIWLENIDIVPLYLAAERPVLERDGMLMMIDDNRINLQSGEVIKKRMVRFRTLGCWPLTGAVESNAQTLPEIIEEMLVSTTSERQGRVIDRDQAGSMELKKRQGYF</sequence>
<proteinExistence type="inferred from homology"/>
<name>CYSD_ECOUT</name>
<feature type="chain" id="PRO_1000008957" description="Sulfate adenylyltransferase subunit 2">
    <location>
        <begin position="1"/>
        <end position="302"/>
    </location>
</feature>
<evidence type="ECO:0000255" key="1">
    <source>
        <dbReference type="HAMAP-Rule" id="MF_00064"/>
    </source>
</evidence>